<gene>
    <name evidence="1" type="primary">glyA</name>
    <name type="ordered locus">Lxx18640</name>
</gene>
<keyword id="KW-0028">Amino-acid biosynthesis</keyword>
<keyword id="KW-0963">Cytoplasm</keyword>
<keyword id="KW-0554">One-carbon metabolism</keyword>
<keyword id="KW-0663">Pyridoxal phosphate</keyword>
<keyword id="KW-1185">Reference proteome</keyword>
<keyword id="KW-0808">Transferase</keyword>
<feature type="chain" id="PRO_0000113596" description="Serine hydroxymethyltransferase">
    <location>
        <begin position="1"/>
        <end position="430"/>
    </location>
</feature>
<feature type="binding site" evidence="1">
    <location>
        <position position="126"/>
    </location>
    <ligand>
        <name>(6S)-5,6,7,8-tetrahydrofolate</name>
        <dbReference type="ChEBI" id="CHEBI:57453"/>
    </ligand>
</feature>
<feature type="binding site" evidence="1">
    <location>
        <begin position="130"/>
        <end position="132"/>
    </location>
    <ligand>
        <name>(6S)-5,6,7,8-tetrahydrofolate</name>
        <dbReference type="ChEBI" id="CHEBI:57453"/>
    </ligand>
</feature>
<feature type="site" description="Plays an important role in substrate specificity" evidence="1">
    <location>
        <position position="234"/>
    </location>
</feature>
<feature type="modified residue" description="N6-(pyridoxal phosphate)lysine" evidence="1">
    <location>
        <position position="235"/>
    </location>
</feature>
<evidence type="ECO:0000255" key="1">
    <source>
        <dbReference type="HAMAP-Rule" id="MF_00051"/>
    </source>
</evidence>
<comment type="function">
    <text evidence="1">Catalyzes the reversible interconversion of serine and glycine with tetrahydrofolate (THF) serving as the one-carbon carrier. This reaction serves as the major source of one-carbon groups required for the biosynthesis of purines, thymidylate, methionine, and other important biomolecules. Also exhibits THF-independent aldolase activity toward beta-hydroxyamino acids, producing glycine and aldehydes, via a retro-aldol mechanism.</text>
</comment>
<comment type="catalytic activity">
    <reaction evidence="1">
        <text>(6R)-5,10-methylene-5,6,7,8-tetrahydrofolate + glycine + H2O = (6S)-5,6,7,8-tetrahydrofolate + L-serine</text>
        <dbReference type="Rhea" id="RHEA:15481"/>
        <dbReference type="ChEBI" id="CHEBI:15377"/>
        <dbReference type="ChEBI" id="CHEBI:15636"/>
        <dbReference type="ChEBI" id="CHEBI:33384"/>
        <dbReference type="ChEBI" id="CHEBI:57305"/>
        <dbReference type="ChEBI" id="CHEBI:57453"/>
        <dbReference type="EC" id="2.1.2.1"/>
    </reaction>
</comment>
<comment type="cofactor">
    <cofactor evidence="1">
        <name>pyridoxal 5'-phosphate</name>
        <dbReference type="ChEBI" id="CHEBI:597326"/>
    </cofactor>
</comment>
<comment type="pathway">
    <text evidence="1">One-carbon metabolism; tetrahydrofolate interconversion.</text>
</comment>
<comment type="pathway">
    <text evidence="1">Amino-acid biosynthesis; glycine biosynthesis; glycine from L-serine: step 1/1.</text>
</comment>
<comment type="subunit">
    <text evidence="1">Homodimer.</text>
</comment>
<comment type="subcellular location">
    <subcellularLocation>
        <location evidence="1">Cytoplasm</location>
    </subcellularLocation>
</comment>
<comment type="similarity">
    <text evidence="1">Belongs to the SHMT family.</text>
</comment>
<protein>
    <recommendedName>
        <fullName evidence="1">Serine hydroxymethyltransferase</fullName>
        <shortName evidence="1">SHMT</shortName>
        <shortName evidence="1">Serine methylase</shortName>
        <ecNumber evidence="1">2.1.2.1</ecNumber>
    </recommendedName>
</protein>
<sequence length="430" mass="45756">MTDTLPSTFTASLAEVDPEIAEVLQLELGRQRDYLEMIASENFVPRAVLESVGSVLTNKYAEGYPGRRYYGGCEYVDIAEQLAIDRAKSLFGAEYANVQPHSGASANAAVLSAIATPGETILGLELAHGGHLTHGMKLNFSGKLYNAVAYGVDPETFLVDMDAVRDRALEHKPQVIIAGWSAYPRQLDFAAFRAIADEVGAKLWVDMAHFAGLVAAGLHPSPVPYADVVSSTVHKTLGGPRSGFIVSRDTELAKKLNSNVFPGQQGGPLMHVIAAKATAFKLAATDEFKDRQARTIRGAQLLAERLTAADSRASGVDVLTGGTDVHLVLADLRTSELDGQQAEDILHEVGITVNRNAVPFDPRPPMVTSGLRIGTPALATRGFGDTEFTEVADIIALALRPGADTRALRARVDALTAAFPLYPGLAPSAS</sequence>
<proteinExistence type="inferred from homology"/>
<dbReference type="EC" id="2.1.2.1" evidence="1"/>
<dbReference type="EMBL" id="AE016822">
    <property type="protein sequence ID" value="AAT89595.1"/>
    <property type="molecule type" value="Genomic_DNA"/>
</dbReference>
<dbReference type="RefSeq" id="WP_011186583.1">
    <property type="nucleotide sequence ID" value="NC_006087.1"/>
</dbReference>
<dbReference type="SMR" id="Q6ADF0"/>
<dbReference type="STRING" id="281090.Lxx18640"/>
<dbReference type="KEGG" id="lxx:Lxx18640"/>
<dbReference type="eggNOG" id="COG0112">
    <property type="taxonomic scope" value="Bacteria"/>
</dbReference>
<dbReference type="HOGENOM" id="CLU_022477_2_1_11"/>
<dbReference type="UniPathway" id="UPA00193"/>
<dbReference type="UniPathway" id="UPA00288">
    <property type="reaction ID" value="UER01023"/>
</dbReference>
<dbReference type="Proteomes" id="UP000001306">
    <property type="component" value="Chromosome"/>
</dbReference>
<dbReference type="GO" id="GO:0005829">
    <property type="term" value="C:cytosol"/>
    <property type="evidence" value="ECO:0007669"/>
    <property type="project" value="TreeGrafter"/>
</dbReference>
<dbReference type="GO" id="GO:0004372">
    <property type="term" value="F:glycine hydroxymethyltransferase activity"/>
    <property type="evidence" value="ECO:0007669"/>
    <property type="project" value="UniProtKB-UniRule"/>
</dbReference>
<dbReference type="GO" id="GO:0030170">
    <property type="term" value="F:pyridoxal phosphate binding"/>
    <property type="evidence" value="ECO:0007669"/>
    <property type="project" value="UniProtKB-UniRule"/>
</dbReference>
<dbReference type="GO" id="GO:0019264">
    <property type="term" value="P:glycine biosynthetic process from serine"/>
    <property type="evidence" value="ECO:0007669"/>
    <property type="project" value="UniProtKB-UniRule"/>
</dbReference>
<dbReference type="GO" id="GO:0035999">
    <property type="term" value="P:tetrahydrofolate interconversion"/>
    <property type="evidence" value="ECO:0007669"/>
    <property type="project" value="UniProtKB-UniRule"/>
</dbReference>
<dbReference type="CDD" id="cd00378">
    <property type="entry name" value="SHMT"/>
    <property type="match status" value="1"/>
</dbReference>
<dbReference type="FunFam" id="3.40.640.10:FF:000001">
    <property type="entry name" value="Serine hydroxymethyltransferase"/>
    <property type="match status" value="1"/>
</dbReference>
<dbReference type="Gene3D" id="3.90.1150.10">
    <property type="entry name" value="Aspartate Aminotransferase, domain 1"/>
    <property type="match status" value="1"/>
</dbReference>
<dbReference type="Gene3D" id="3.40.640.10">
    <property type="entry name" value="Type I PLP-dependent aspartate aminotransferase-like (Major domain)"/>
    <property type="match status" value="1"/>
</dbReference>
<dbReference type="HAMAP" id="MF_00051">
    <property type="entry name" value="SHMT"/>
    <property type="match status" value="1"/>
</dbReference>
<dbReference type="InterPro" id="IPR015424">
    <property type="entry name" value="PyrdxlP-dep_Trfase"/>
</dbReference>
<dbReference type="InterPro" id="IPR015421">
    <property type="entry name" value="PyrdxlP-dep_Trfase_major"/>
</dbReference>
<dbReference type="InterPro" id="IPR015422">
    <property type="entry name" value="PyrdxlP-dep_Trfase_small"/>
</dbReference>
<dbReference type="InterPro" id="IPR001085">
    <property type="entry name" value="Ser_HO-MeTrfase"/>
</dbReference>
<dbReference type="InterPro" id="IPR049943">
    <property type="entry name" value="Ser_HO-MeTrfase-like"/>
</dbReference>
<dbReference type="InterPro" id="IPR019798">
    <property type="entry name" value="Ser_HO-MeTrfase_PLP_BS"/>
</dbReference>
<dbReference type="InterPro" id="IPR039429">
    <property type="entry name" value="SHMT-like_dom"/>
</dbReference>
<dbReference type="NCBIfam" id="NF000586">
    <property type="entry name" value="PRK00011.1"/>
    <property type="match status" value="1"/>
</dbReference>
<dbReference type="PANTHER" id="PTHR11680">
    <property type="entry name" value="SERINE HYDROXYMETHYLTRANSFERASE"/>
    <property type="match status" value="1"/>
</dbReference>
<dbReference type="PANTHER" id="PTHR11680:SF35">
    <property type="entry name" value="SERINE HYDROXYMETHYLTRANSFERASE 1"/>
    <property type="match status" value="1"/>
</dbReference>
<dbReference type="Pfam" id="PF00464">
    <property type="entry name" value="SHMT"/>
    <property type="match status" value="1"/>
</dbReference>
<dbReference type="PIRSF" id="PIRSF000412">
    <property type="entry name" value="SHMT"/>
    <property type="match status" value="1"/>
</dbReference>
<dbReference type="SUPFAM" id="SSF53383">
    <property type="entry name" value="PLP-dependent transferases"/>
    <property type="match status" value="1"/>
</dbReference>
<dbReference type="PROSITE" id="PS00096">
    <property type="entry name" value="SHMT"/>
    <property type="match status" value="1"/>
</dbReference>
<accession>Q6ADF0</accession>
<name>GLYA_LEIXX</name>
<reference key="1">
    <citation type="journal article" date="2004" name="Mol. Plant Microbe Interact.">
        <title>The genome sequence of the Gram-positive sugarcane pathogen Leifsonia xyli subsp. xyli.</title>
        <authorList>
            <person name="Monteiro-Vitorello C.B."/>
            <person name="Camargo L.E.A."/>
            <person name="Van Sluys M.A."/>
            <person name="Kitajima J.P."/>
            <person name="Truffi D."/>
            <person name="do Amaral A.M."/>
            <person name="Harakava R."/>
            <person name="de Oliveira J.C.F."/>
            <person name="Wood D."/>
            <person name="de Oliveira M.C."/>
            <person name="Miyaki C.Y."/>
            <person name="Takita M.A."/>
            <person name="da Silva A.C.R."/>
            <person name="Furlan L.R."/>
            <person name="Carraro D.M."/>
            <person name="Camarotte G."/>
            <person name="Almeida N.F. Jr."/>
            <person name="Carrer H."/>
            <person name="Coutinho L.L."/>
            <person name="El-Dorry H.A."/>
            <person name="Ferro M.I.T."/>
            <person name="Gagliardi P.R."/>
            <person name="Giglioti E."/>
            <person name="Goldman M.H.S."/>
            <person name="Goldman G.H."/>
            <person name="Kimura E.T."/>
            <person name="Ferro E.S."/>
            <person name="Kuramae E.E."/>
            <person name="Lemos E.G.M."/>
            <person name="Lemos M.V.F."/>
            <person name="Mauro S.M.Z."/>
            <person name="Machado M.A."/>
            <person name="Marino C.L."/>
            <person name="Menck C.F."/>
            <person name="Nunes L.R."/>
            <person name="Oliveira R.C."/>
            <person name="Pereira G.G."/>
            <person name="Siqueira W."/>
            <person name="de Souza A.A."/>
            <person name="Tsai S.M."/>
            <person name="Zanca A.S."/>
            <person name="Simpson A.J.G."/>
            <person name="Brumbley S.M."/>
            <person name="Setubal J.C."/>
        </authorList>
    </citation>
    <scope>NUCLEOTIDE SEQUENCE [LARGE SCALE GENOMIC DNA]</scope>
    <source>
        <strain>CTCB07</strain>
    </source>
</reference>
<organism>
    <name type="scientific">Leifsonia xyli subsp. xyli (strain CTCB07)</name>
    <dbReference type="NCBI Taxonomy" id="281090"/>
    <lineage>
        <taxon>Bacteria</taxon>
        <taxon>Bacillati</taxon>
        <taxon>Actinomycetota</taxon>
        <taxon>Actinomycetes</taxon>
        <taxon>Micrococcales</taxon>
        <taxon>Microbacteriaceae</taxon>
        <taxon>Leifsonia</taxon>
    </lineage>
</organism>